<name>DSRB_SALAR</name>
<organism>
    <name type="scientific">Salmonella arizonae (strain ATCC BAA-731 / CDC346-86 / RSK2980)</name>
    <dbReference type="NCBI Taxonomy" id="41514"/>
    <lineage>
        <taxon>Bacteria</taxon>
        <taxon>Pseudomonadati</taxon>
        <taxon>Pseudomonadota</taxon>
        <taxon>Gammaproteobacteria</taxon>
        <taxon>Enterobacterales</taxon>
        <taxon>Enterobacteriaceae</taxon>
        <taxon>Salmonella</taxon>
    </lineage>
</organism>
<dbReference type="EMBL" id="CP000880">
    <property type="protein sequence ID" value="ABX20865.1"/>
    <property type="molecule type" value="Genomic_DNA"/>
</dbReference>
<dbReference type="SMR" id="A9MMJ6"/>
<dbReference type="KEGG" id="ses:SARI_00954"/>
<dbReference type="HOGENOM" id="CLU_189289_0_0_6"/>
<dbReference type="Proteomes" id="UP000002084">
    <property type="component" value="Chromosome"/>
</dbReference>
<dbReference type="HAMAP" id="MF_01549">
    <property type="entry name" value="DsrB"/>
    <property type="match status" value="1"/>
</dbReference>
<dbReference type="InterPro" id="IPR019717">
    <property type="entry name" value="Dextransucrase_DSRB"/>
</dbReference>
<dbReference type="NCBIfam" id="NF007981">
    <property type="entry name" value="PRK10708.1"/>
    <property type="match status" value="1"/>
</dbReference>
<dbReference type="Pfam" id="PF10781">
    <property type="entry name" value="DSRB"/>
    <property type="match status" value="1"/>
</dbReference>
<protein>
    <recommendedName>
        <fullName evidence="1">Protein DsrB</fullName>
    </recommendedName>
</protein>
<gene>
    <name evidence="1" type="primary">dsrB</name>
    <name type="ordered locus">SARI_00954</name>
</gene>
<feature type="chain" id="PRO_1000087729" description="Protein DsrB">
    <location>
        <begin position="1"/>
        <end position="64"/>
    </location>
</feature>
<comment type="similarity">
    <text evidence="1">Belongs to the DsrB family.</text>
</comment>
<evidence type="ECO:0000255" key="1">
    <source>
        <dbReference type="HAMAP-Rule" id="MF_01549"/>
    </source>
</evidence>
<reference key="1">
    <citation type="submission" date="2007-11" db="EMBL/GenBank/DDBJ databases">
        <authorList>
            <consortium name="The Salmonella enterica serovar Arizonae Genome Sequencing Project"/>
            <person name="McClelland M."/>
            <person name="Sanderson E.K."/>
            <person name="Porwollik S."/>
            <person name="Spieth J."/>
            <person name="Clifton W.S."/>
            <person name="Fulton R."/>
            <person name="Chunyan W."/>
            <person name="Wollam A."/>
            <person name="Shah N."/>
            <person name="Pepin K."/>
            <person name="Bhonagiri V."/>
            <person name="Nash W."/>
            <person name="Johnson M."/>
            <person name="Thiruvilangam P."/>
            <person name="Wilson R."/>
        </authorList>
    </citation>
    <scope>NUCLEOTIDE SEQUENCE [LARGE SCALE GENOMIC DNA]</scope>
    <source>
        <strain>ATCC BAA-731 / CDC346-86 / RSK2980</strain>
    </source>
</reference>
<accession>A9MMJ6</accession>
<proteinExistence type="inferred from homology"/>
<sequence>MKVNDRVTVKTDGGPRRPGVVLAVEEFSEGIMYLVSLEDYPLGIWFFNESGHQDGIFVEKAEQD</sequence>
<keyword id="KW-1185">Reference proteome</keyword>